<proteinExistence type="evidence at transcript level"/>
<gene>
    <name type="primary">1C</name>
    <name type="synonym">NS1</name>
</gene>
<protein>
    <recommendedName>
        <fullName>Non-structural protein 1</fullName>
    </recommendedName>
    <alternativeName>
        <fullName>Non-structural protein 1C</fullName>
    </alternativeName>
</protein>
<reference key="1">
    <citation type="submission" date="1995-08" db="EMBL/GenBank/DDBJ databases">
        <authorList>
            <person name="Mazumder B."/>
            <person name="Dupuy L.C."/>
            <person name="McLean T."/>
            <person name="Barik S."/>
        </authorList>
    </citation>
    <scope>NUCLEOTIDE SEQUENCE [MRNA]</scope>
</reference>
<reference key="2">
    <citation type="journal article" date="2005" name="J. Virol.">
        <title>Respiratory syncytial virus nonstructural proteins NS1 and NS2 mediate inhibition of Stat2 expression and alpha/beta interferon responsiveness.</title>
        <authorList>
            <person name="Lo M.S."/>
            <person name="Brazas R.M."/>
            <person name="Holtzman M.J."/>
        </authorList>
    </citation>
    <scope>NUCLEOTIDE SEQUENCE [LARGE SCALE GENOMIC RNA]</scope>
    <scope>VARIANT VAL-82</scope>
    <source>
        <strain>ATCC VR-26</strain>
    </source>
</reference>
<reference key="3">
    <citation type="journal article" date="2011" name="PLoS ONE">
        <title>Whole Genome Sequencing and Evolutionary Analysis of Human Respiratory Syncytial Virus A and B from Milwaukee, WI 1998-2010.</title>
        <authorList>
            <person name="Rebuffo-Scheer C."/>
            <person name="Bose M.E."/>
            <person name="He J."/>
            <person name="Khaja S."/>
            <person name="Ulatowski M."/>
            <person name="Beck E.T."/>
            <person name="Fan J."/>
            <person name="Kumar S."/>
            <person name="Nelson M.I."/>
            <person name="Henrickson K.J."/>
        </authorList>
    </citation>
    <scope>NUCLEOTIDE SEQUENCE [LARGE SCALE GENOMIC RNA]</scope>
</reference>
<reference key="4">
    <citation type="journal article" date="2011" name="Virol. J.">
        <title>Whole genome characterization of non-tissue culture adapted HRSV strains in severely infected children.</title>
        <authorList>
            <person name="Kumaria R."/>
            <person name="Iyer L.R."/>
            <person name="Hibberd M.L."/>
            <person name="Simoes E.A."/>
            <person name="Sugrue R.J."/>
        </authorList>
    </citation>
    <scope>NUCLEOTIDE SEQUENCE [LARGE SCALE GENOMIC RNA]</scope>
</reference>
<reference key="5">
    <citation type="journal article" date="2012" name="PLoS ONE">
        <title>Genetic Variability among Complete Human Respiratory Syncytial Virus Subgroup A Genomes: Bridging Molecular Evolutionary Dynamics and Epidemiology.</title>
        <authorList>
            <person name="Tan L."/>
            <person name="Lemey P."/>
            <person name="Houspie L."/>
            <person name="C Viveen M."/>
            <person name="Jansen N.J."/>
            <person name="van Loon A.M."/>
            <person name="Wiertz E."/>
            <person name="van Bleek G.M."/>
            <person name="Martin D.P."/>
            <person name="Coenjaerts F.E."/>
        </authorList>
    </citation>
    <scope>NUCLEOTIDE SEQUENCE [LARGE SCALE GENOMIC RNA]</scope>
</reference>
<reference key="6">
    <citation type="journal article" date="2015" name="J. Gen. Virol.">
        <title>Direct whole-genome deep-sequencing of human respiratory syncytial virus A and B from Vietnamese children identifies distinct patterns of inter- and intra-host evolution.</title>
        <authorList>
            <person name="Do L.A."/>
            <person name="Wilm A."/>
            <person name="van Doorn H.R."/>
            <person name="Lam H.M."/>
            <person name="Sim S."/>
            <person name="Sukumaran R."/>
            <person name="Tran A.T."/>
            <person name="Nguyen B.H."/>
            <person name="Tran T.T."/>
            <person name="Tran Q.H."/>
            <person name="Vo Q.B."/>
            <person name="Tran Dac N.A."/>
            <person name="Trinh H.N."/>
            <person name="Nguyen T.T."/>
            <person name="Le Binh B.T."/>
            <person name="Le K."/>
            <person name="Nguyen M.T."/>
            <person name="Thai Q.T."/>
            <person name="Vo T.V."/>
            <person name="Ngo N.Q."/>
            <person name="Dang T.K."/>
            <person name="Cao N.H."/>
            <person name="Tran T.V."/>
            <person name="Ho L.V."/>
            <person name="Farrar J."/>
            <person name="De Jong M."/>
            <person name="Chen S."/>
            <person name="Nagarajan N."/>
            <person name="Bryant J.E."/>
            <person name="Hibberd M.L."/>
        </authorList>
    </citation>
    <scope>NUCLEOTIDE SEQUENCE [LARGE SCALE GENOMIC RNA]</scope>
</reference>
<reference key="7">
    <citation type="journal article" date="2018" name="Viruses">
        <title>Evolution of Human Respiratory Syncytial Virus (RSV) over Multiple Seasons in New South Wales, Australia.</title>
        <authorList>
            <person name="Di Giallonardo F."/>
            <person name="Kok J."/>
            <person name="Fernandez M."/>
            <person name="Carter I."/>
            <person name="Geoghegan J.L."/>
            <person name="Dwyer D.E."/>
            <person name="Holmes E.C."/>
            <person name="Eden J.S."/>
        </authorList>
    </citation>
    <scope>NUCLEOTIDE SEQUENCE [GENOMIC RNA]</scope>
</reference>
<reference key="8">
    <citation type="journal article" date="2019" name="Sci. Rep.">
        <title>The Interactome analysis of the Respiratory Syncytial Virus protein M2-1 suggests a new role in viral mRNA metabolism post-transcription.</title>
        <authorList>
            <person name="Bouillier C."/>
            <person name="Cosentino G."/>
            <person name="Leger T."/>
            <person name="Rincheval V."/>
            <person name="Richard C.A."/>
            <person name="Desquesnes A."/>
            <person name="Sitterlin D."/>
            <person name="Blouquit-Laye S."/>
            <person name="Eleouet J.F."/>
            <person name="Gault E."/>
            <person name="Rameix-Welti M.A."/>
        </authorList>
    </citation>
    <scope>NUCLEOTIDE SEQUENCE [GENOMIC RNA]</scope>
</reference>
<reference key="9">
    <citation type="journal article" date="2021" name="Nature">
        <title>A condensate-hardening drug blocks RSV replication in vivo.</title>
        <authorList>
            <person name="Risso-Ballester J."/>
            <person name="Galloux M."/>
            <person name="Cao J."/>
            <person name="Le Goffic R."/>
            <person name="Hontonnou F."/>
            <person name="Jobart-Malfait A."/>
            <person name="Desquesnes A."/>
            <person name="Sake S.M."/>
            <person name="Haid S."/>
            <person name="Du M."/>
            <person name="Zhang X."/>
            <person name="Zhang H."/>
            <person name="Wang Z."/>
            <person name="Rincheval V."/>
            <person name="Zhang Y."/>
            <person name="Pietschmann T."/>
            <person name="Eleouet J.F."/>
            <person name="Rameix-Welti M.A."/>
            <person name="Altmeyer R."/>
        </authorList>
    </citation>
    <scope>NUCLEOTIDE SEQUENCE [GENOMIC RNA]</scope>
</reference>
<reference key="10">
    <citation type="journal article" date="2019" name="PLoS Pathog.">
        <title>Respiratory syncytial virus nonstructural proteins 1 and 2: Exceptional disrupters of innate immune responses.</title>
        <authorList>
            <person name="Sedeyn K."/>
            <person name="Schepens B."/>
            <person name="Saelens X."/>
        </authorList>
    </citation>
    <scope>REVIEW</scope>
</reference>
<reference key="11">
    <citation type="journal article" date="2020" name="Front. Cell. Infect. Microbiol.">
        <title>Respiratory Syncytial Virus's Non-structural Proteins: Masters of Interference.</title>
        <authorList>
            <person name="Thornhill E.M."/>
            <person name="Verhoeven D."/>
        </authorList>
    </citation>
    <scope>REVIEW</scope>
</reference>
<evidence type="ECO:0000250" key="1">
    <source>
        <dbReference type="UniProtKB" id="P0DOE9"/>
    </source>
</evidence>
<evidence type="ECO:0000269" key="2">
    <source>
    </source>
</evidence>
<evidence type="ECO:0000305" key="3"/>
<organismHost>
    <name type="scientific">Homo sapiens</name>
    <name type="common">Human</name>
    <dbReference type="NCBI Taxonomy" id="9606"/>
</organismHost>
<name>NS1_HRSV</name>
<comment type="function">
    <text evidence="1">Plays a major role in antagonizing the type I IFN-mediated antiviral response by degrading or inhibiting multiple cellular factors required for either IFN induction or response pathways. Acts cooperatively with NS2 to repress activation and nuclear translocation of host IFN-regulatory factor IRF3. Also disrupts the association of IRF3 with CREBBP. Interacts with host mitochondrial-associated membrane (MAM) MAVS and prevents the interaction with RIGI. Interacts with TRIM25 to suppress TRIM25-mediated RIGI ubiquitination and thereby RIGI-MAVS interaction. Together with NS2, participates in the proteasomal degradation of host STAT2, IRF3, IRF7, TBK1 and RIGI through a NS-degradasome involving CUL2 and Elongin-C. The degradasome requires an intact mitochondrial MAVS. Decreases the levels of host TRAF3 and IKBKE/IKK-epsilon. As functions other than disruptions of the type I IFN-mediated antiviral signaling pathways, induces host SOCS1 and SOCS3 expression. Suppresses premature apoptosis by an NF-kappa-B-dependent, interferon-independent mechanism and thus facilitates virus growth. Additionally, NS1 may serve some inhibitory role in viral transcription and RNA replication. Suppresses proliferation and activation of host CD103+ CD8+ cytotoxic T-lymphocytes and Th17 helper T-lymphocytes.</text>
</comment>
<comment type="subunit">
    <text evidence="1">Monomer. Homomultimer. Heteromultimer with NS2. Interacts with the matrix protein M. Interacts with host ELOC and CUL2; this interaction allows NS1 to form an active E3 ligase with ELOC and CUL2. Interacts with host IRF3; this interaction leads to the disrupted association of IRF3 with CREBBP and thus reduced binding of IRF3 to the IFN-beta promoter. Interacts with host MAVS; this interaction prevents MAVS binding to RIGI and inhibits signaling pathway leading to interferon production. Interacts with host MAP1B/microtubule-associated protein 1B. Interacts with host TRIM25 (via SPRY domain); this interaction suppresses RIGI ubiquitination and results in decreased interaction between RIGI and MAVS.</text>
</comment>
<comment type="subcellular location">
    <subcellularLocation>
        <location evidence="1">Host cytoplasm</location>
    </subcellularLocation>
    <subcellularLocation>
        <location evidence="1">Host mitochondrion</location>
    </subcellularLocation>
    <subcellularLocation>
        <location evidence="1">Host nucleus</location>
    </subcellularLocation>
    <text evidence="1">Most NS1 resides in the mitochondria as a heteromer with NS2.</text>
</comment>
<comment type="domain">
    <text evidence="1">N-terminus is important for IKBKE/IKK-epsilon reduction. The DNLP motif has IFN suppressive functions like binding to host MAP1B.</text>
</comment>
<comment type="similarity">
    <text evidence="3">Belongs to the pneumovirus non-structural protein 1 family.</text>
</comment>
<keyword id="KW-1035">Host cytoplasm</keyword>
<keyword id="KW-1045">Host mitochondrion</keyword>
<keyword id="KW-1048">Host nucleus</keyword>
<keyword id="KW-0945">Host-virus interaction</keyword>
<keyword id="KW-1080">Inhibition of host adaptive immune response by virus</keyword>
<keyword id="KW-1090">Inhibition of host innate immune response by virus</keyword>
<keyword id="KW-1114">Inhibition of host interferon signaling pathway by virus</keyword>
<keyword id="KW-1092">Inhibition of host IRF3 by virus</keyword>
<keyword id="KW-1093">Inhibition of host IRF7 by virus</keyword>
<keyword id="KW-1097">Inhibition of host MAVS by virus</keyword>
<keyword id="KW-1088">Inhibition of host RIG-I by virus</keyword>
<keyword id="KW-1113">Inhibition of host RLR pathway by virus</keyword>
<keyword id="KW-1106">Inhibition of host STAT2 by virus</keyword>
<keyword id="KW-1223">Inhibition of host TBK1 by virus</keyword>
<keyword id="KW-1225">Inhibition of host TLR pathway by virus</keyword>
<keyword id="KW-0922">Interferon antiviral system evasion</keyword>
<keyword id="KW-1119">Modulation of host cell apoptosis by virus</keyword>
<keyword id="KW-0899">Viral immunoevasion</keyword>
<feature type="chain" id="PRO_0000142785" description="Non-structural protein 1">
    <location>
        <begin position="1"/>
        <end position="139"/>
    </location>
</feature>
<feature type="short sequence motif" description="DLNP; interaction with MAP1B" evidence="1">
    <location>
        <begin position="136"/>
        <end position="139"/>
    </location>
</feature>
<feature type="sequence variant" evidence="2">
    <original>A</original>
    <variation>V</variation>
    <location>
        <position position="82"/>
    </location>
</feature>
<dbReference type="EMBL" id="U35030">
    <property type="protein sequence ID" value="AAA79091.1"/>
    <property type="molecule type" value="mRNA"/>
</dbReference>
<dbReference type="EMBL" id="AY911262">
    <property type="protein sequence ID" value="AAX23987.1"/>
    <property type="molecule type" value="Genomic_RNA"/>
</dbReference>
<dbReference type="EMBL" id="GU591759">
    <property type="protein sequence ID" value="AEO45823.1"/>
    <property type="molecule type" value="Viral_cRNA"/>
</dbReference>
<dbReference type="EMBL" id="GU591768">
    <property type="protein sequence ID" value="AEO45912.1"/>
    <property type="molecule type" value="Viral_cRNA"/>
</dbReference>
<dbReference type="EMBL" id="JF920058">
    <property type="protein sequence ID" value="AEQ63437.1"/>
    <property type="molecule type" value="Viral_cRNA"/>
</dbReference>
<dbReference type="EMBL" id="JF920059">
    <property type="protein sequence ID" value="AEQ63448.1"/>
    <property type="molecule type" value="Viral_cRNA"/>
</dbReference>
<dbReference type="EMBL" id="JF920067">
    <property type="protein sequence ID" value="AEQ63469.1"/>
    <property type="molecule type" value="Viral_cRNA"/>
</dbReference>
<dbReference type="EMBL" id="JF920062">
    <property type="protein sequence ID" value="AEQ63480.1"/>
    <property type="molecule type" value="Viral_cRNA"/>
</dbReference>
<dbReference type="EMBL" id="JF920063">
    <property type="protein sequence ID" value="AEQ63491.1"/>
    <property type="molecule type" value="Viral_cRNA"/>
</dbReference>
<dbReference type="EMBL" id="JF920061">
    <property type="protein sequence ID" value="AEQ63502.1"/>
    <property type="molecule type" value="Viral_cRNA"/>
</dbReference>
<dbReference type="EMBL" id="JF920066">
    <property type="protein sequence ID" value="AEQ63524.1"/>
    <property type="molecule type" value="Viral_cRNA"/>
</dbReference>
<dbReference type="EMBL" id="JF920064">
    <property type="protein sequence ID" value="AEQ63535.1"/>
    <property type="molecule type" value="Viral_cRNA"/>
</dbReference>
<dbReference type="EMBL" id="JF920068">
    <property type="protein sequence ID" value="AEQ63546.1"/>
    <property type="molecule type" value="Viral_cRNA"/>
</dbReference>
<dbReference type="EMBL" id="JQ901456">
    <property type="protein sequence ID" value="AFM55226.1"/>
    <property type="molecule type" value="Viral_cRNA"/>
</dbReference>
<dbReference type="EMBL" id="JQ901451">
    <property type="protein sequence ID" value="AFM55281.1"/>
    <property type="molecule type" value="Viral_cRNA"/>
</dbReference>
<dbReference type="EMBL" id="JQ901450">
    <property type="protein sequence ID" value="AFM55292.1"/>
    <property type="molecule type" value="Viral_cRNA"/>
</dbReference>
<dbReference type="EMBL" id="JQ901449">
    <property type="protein sequence ID" value="AFM55303.1"/>
    <property type="molecule type" value="Viral_cRNA"/>
</dbReference>
<dbReference type="EMBL" id="JQ901448">
    <property type="protein sequence ID" value="AFM55314.1"/>
    <property type="molecule type" value="Viral_cRNA"/>
</dbReference>
<dbReference type="EMBL" id="JX015485">
    <property type="protein sequence ID" value="AFM55402.1"/>
    <property type="molecule type" value="Viral_cRNA"/>
</dbReference>
<dbReference type="EMBL" id="JX015487">
    <property type="protein sequence ID" value="AFM55424.1"/>
    <property type="molecule type" value="Viral_cRNA"/>
</dbReference>
<dbReference type="EMBL" id="JX015488">
    <property type="protein sequence ID" value="AFM55435.1"/>
    <property type="molecule type" value="Viral_cRNA"/>
</dbReference>
<dbReference type="EMBL" id="JX069801">
    <property type="protein sequence ID" value="AFM95369.1"/>
    <property type="molecule type" value="Viral_cRNA"/>
</dbReference>
<dbReference type="EMBL" id="JX069802">
    <property type="protein sequence ID" value="AFM95380.1"/>
    <property type="molecule type" value="Viral_cRNA"/>
</dbReference>
<dbReference type="EMBL" id="JX069803">
    <property type="protein sequence ID" value="AFM95391.1"/>
    <property type="molecule type" value="Viral_cRNA"/>
</dbReference>
<dbReference type="EMBL" id="JQ359532">
    <property type="protein sequence ID" value="AFV32514.1"/>
    <property type="molecule type" value="Viral_cRNA"/>
</dbReference>
<dbReference type="EMBL" id="JQ359533">
    <property type="protein sequence ID" value="AFV32516.1"/>
    <property type="molecule type" value="Viral_cRNA"/>
</dbReference>
<dbReference type="EMBL" id="JQ359534">
    <property type="protein sequence ID" value="AFV32518.1"/>
    <property type="molecule type" value="Viral_cRNA"/>
</dbReference>
<dbReference type="EMBL" id="JQ359535">
    <property type="protein sequence ID" value="AFV32520.1"/>
    <property type="molecule type" value="Viral_cRNA"/>
</dbReference>
<dbReference type="EMBL" id="JQ359536">
    <property type="protein sequence ID" value="AFV32522.1"/>
    <property type="molecule type" value="Viral_cRNA"/>
</dbReference>
<dbReference type="EMBL" id="JQ359537">
    <property type="protein sequence ID" value="AFV32524.1"/>
    <property type="molecule type" value="Viral_cRNA"/>
</dbReference>
<dbReference type="EMBL" id="JQ359538">
    <property type="protein sequence ID" value="AFV32526.1"/>
    <property type="molecule type" value="Viral_cRNA"/>
</dbReference>
<dbReference type="EMBL" id="JQ359540">
    <property type="protein sequence ID" value="AFV32530.1"/>
    <property type="molecule type" value="Viral_cRNA"/>
</dbReference>
<dbReference type="EMBL" id="JQ359541">
    <property type="protein sequence ID" value="AFV32532.1"/>
    <property type="molecule type" value="Viral_cRNA"/>
</dbReference>
<dbReference type="EMBL" id="JQ359542">
    <property type="protein sequence ID" value="AFV32534.1"/>
    <property type="molecule type" value="Viral_cRNA"/>
</dbReference>
<dbReference type="EMBL" id="JQ359543">
    <property type="protein sequence ID" value="AFV32536.1"/>
    <property type="molecule type" value="Viral_cRNA"/>
</dbReference>
<dbReference type="EMBL" id="JQ359544">
    <property type="protein sequence ID" value="AFV32538.1"/>
    <property type="molecule type" value="Viral_cRNA"/>
</dbReference>
<dbReference type="EMBL" id="JQ359545">
    <property type="protein sequence ID" value="AFV32540.1"/>
    <property type="molecule type" value="Viral_cRNA"/>
</dbReference>
<dbReference type="EMBL" id="JQ359546">
    <property type="protein sequence ID" value="AFV32542.1"/>
    <property type="molecule type" value="Viral_cRNA"/>
</dbReference>
<dbReference type="EMBL" id="JQ359547">
    <property type="protein sequence ID" value="AFV32544.1"/>
    <property type="molecule type" value="Viral_cRNA"/>
</dbReference>
<dbReference type="EMBL" id="JQ359553">
    <property type="protein sequence ID" value="AFV32556.1"/>
    <property type="molecule type" value="Viral_cRNA"/>
</dbReference>
<dbReference type="EMBL" id="JQ359555">
    <property type="protein sequence ID" value="AFV32560.1"/>
    <property type="molecule type" value="Viral_cRNA"/>
</dbReference>
<dbReference type="EMBL" id="JQ359558">
    <property type="protein sequence ID" value="AFV32566.1"/>
    <property type="molecule type" value="Viral_cRNA"/>
</dbReference>
<dbReference type="EMBL" id="JQ359564">
    <property type="protein sequence ID" value="AFV32578.1"/>
    <property type="molecule type" value="Viral_cRNA"/>
</dbReference>
<dbReference type="EMBL" id="JQ359565">
    <property type="protein sequence ID" value="AFV32580.1"/>
    <property type="molecule type" value="Viral_cRNA"/>
</dbReference>
<dbReference type="EMBL" id="JQ359566">
    <property type="protein sequence ID" value="AFV32582.1"/>
    <property type="molecule type" value="Viral_cRNA"/>
</dbReference>
<dbReference type="EMBL" id="KF530260">
    <property type="protein sequence ID" value="AGT75328.1"/>
    <property type="molecule type" value="Viral_cRNA"/>
</dbReference>
<dbReference type="EMBL" id="KF530268">
    <property type="protein sequence ID" value="AGT75372.1"/>
    <property type="molecule type" value="Viral_cRNA"/>
</dbReference>
<dbReference type="EMBL" id="KF826823">
    <property type="protein sequence ID" value="AHA83676.1"/>
    <property type="molecule type" value="Viral_cRNA"/>
</dbReference>
<dbReference type="EMBL" id="KF826824">
    <property type="protein sequence ID" value="AHA83687.1"/>
    <property type="molecule type" value="Viral_cRNA"/>
</dbReference>
<dbReference type="EMBL" id="KF826826">
    <property type="protein sequence ID" value="AHA83709.1"/>
    <property type="molecule type" value="Viral_cRNA"/>
</dbReference>
<dbReference type="EMBL" id="KF826827">
    <property type="protein sequence ID" value="AHA83720.1"/>
    <property type="molecule type" value="Viral_cRNA"/>
</dbReference>
<dbReference type="EMBL" id="KF826828">
    <property type="protein sequence ID" value="AHA83731.1"/>
    <property type="molecule type" value="Viral_cRNA"/>
</dbReference>
<dbReference type="EMBL" id="KF826832">
    <property type="protein sequence ID" value="AHA83775.1"/>
    <property type="molecule type" value="Viral_cRNA"/>
</dbReference>
<dbReference type="EMBL" id="KF826841">
    <property type="protein sequence ID" value="AHA83873.1"/>
    <property type="molecule type" value="Viral_cRNA"/>
</dbReference>
<dbReference type="EMBL" id="KF826846">
    <property type="protein sequence ID" value="AHA83928.1"/>
    <property type="molecule type" value="Viral_cRNA"/>
</dbReference>
<dbReference type="EMBL" id="KF826847">
    <property type="protein sequence ID" value="AHA83939.1"/>
    <property type="molecule type" value="Viral_cRNA"/>
</dbReference>
<dbReference type="EMBL" id="KF826850">
    <property type="protein sequence ID" value="AHA83972.1"/>
    <property type="molecule type" value="Viral_cRNA"/>
</dbReference>
<dbReference type="EMBL" id="KF826852">
    <property type="protein sequence ID" value="AHA83994.1"/>
    <property type="molecule type" value="Viral_cRNA"/>
</dbReference>
<dbReference type="EMBL" id="KF826854">
    <property type="protein sequence ID" value="AHA84016.1"/>
    <property type="molecule type" value="Viral_cRNA"/>
</dbReference>
<dbReference type="EMBL" id="KF713490">
    <property type="protein sequence ID" value="AHC94756.1"/>
    <property type="molecule type" value="Viral_cRNA"/>
</dbReference>
<dbReference type="EMBL" id="KF713491">
    <property type="protein sequence ID" value="AHC94767.1"/>
    <property type="molecule type" value="Viral_cRNA"/>
</dbReference>
<dbReference type="EMBL" id="KF713492">
    <property type="protein sequence ID" value="AHC94779.1"/>
    <property type="molecule type" value="Viral_cRNA"/>
</dbReference>
<dbReference type="EMBL" id="KJ672447">
    <property type="protein sequence ID" value="AHX57222.1"/>
    <property type="molecule type" value="Viral_cRNA"/>
</dbReference>
<dbReference type="EMBL" id="KJ672462">
    <property type="protein sequence ID" value="AHX57387.1"/>
    <property type="molecule type" value="Viral_cRNA"/>
</dbReference>
<dbReference type="EMBL" id="KJ672474">
    <property type="protein sequence ID" value="AHX57519.1"/>
    <property type="molecule type" value="Viral_cRNA"/>
</dbReference>
<dbReference type="EMBL" id="KJ672479">
    <property type="protein sequence ID" value="AHX57574.1"/>
    <property type="molecule type" value="Viral_cRNA"/>
</dbReference>
<dbReference type="EMBL" id="KJ672483">
    <property type="protein sequence ID" value="AHX57618.1"/>
    <property type="molecule type" value="Viral_cRNA"/>
</dbReference>
<dbReference type="EMBL" id="KJ723462">
    <property type="protein sequence ID" value="AHY21147.1"/>
    <property type="molecule type" value="Viral_cRNA"/>
</dbReference>
<dbReference type="EMBL" id="KJ723464">
    <property type="protein sequence ID" value="AHY21169.1"/>
    <property type="molecule type" value="Viral_cRNA"/>
</dbReference>
<dbReference type="EMBL" id="KJ723465">
    <property type="protein sequence ID" value="AHY21180.1"/>
    <property type="molecule type" value="Viral_cRNA"/>
</dbReference>
<dbReference type="EMBL" id="KJ723468">
    <property type="protein sequence ID" value="AHY21214.1"/>
    <property type="molecule type" value="Viral_cRNA"/>
</dbReference>
<dbReference type="EMBL" id="KJ723472">
    <property type="protein sequence ID" value="AHY21247.1"/>
    <property type="molecule type" value="Viral_cRNA"/>
</dbReference>
<dbReference type="EMBL" id="KJ723473">
    <property type="protein sequence ID" value="AHY21258.1"/>
    <property type="molecule type" value="Viral_cRNA"/>
</dbReference>
<dbReference type="EMBL" id="KJ723483">
    <property type="protein sequence ID" value="AHY21368.1"/>
    <property type="molecule type" value="Viral_cRNA"/>
</dbReference>
<dbReference type="EMBL" id="KJ723487">
    <property type="protein sequence ID" value="AHY21401.1"/>
    <property type="molecule type" value="Viral_cRNA"/>
</dbReference>
<dbReference type="EMBL" id="KJ723488">
    <property type="protein sequence ID" value="AHY21412.1"/>
    <property type="molecule type" value="Viral_cRNA"/>
</dbReference>
<dbReference type="EMBL" id="KJ723490">
    <property type="protein sequence ID" value="AHY21434.1"/>
    <property type="molecule type" value="Viral_cRNA"/>
</dbReference>
<dbReference type="EMBL" id="KJ723492">
    <property type="protein sequence ID" value="AHY21456.1"/>
    <property type="molecule type" value="Viral_cRNA"/>
</dbReference>
<dbReference type="EMBL" id="KP258700">
    <property type="protein sequence ID" value="AIZ95545.1"/>
    <property type="molecule type" value="Viral_cRNA"/>
</dbReference>
<dbReference type="EMBL" id="KP258701">
    <property type="protein sequence ID" value="AIZ95556.1"/>
    <property type="molecule type" value="Viral_cRNA"/>
</dbReference>
<dbReference type="EMBL" id="KP258703">
    <property type="protein sequence ID" value="AIZ95578.1"/>
    <property type="molecule type" value="Viral_cRNA"/>
</dbReference>
<dbReference type="EMBL" id="KP258704">
    <property type="protein sequence ID" value="AIZ95589.1"/>
    <property type="molecule type" value="Viral_cRNA"/>
</dbReference>
<dbReference type="EMBL" id="KP258707">
    <property type="protein sequence ID" value="AIZ95611.1"/>
    <property type="molecule type" value="Viral_cRNA"/>
</dbReference>
<dbReference type="EMBL" id="KP258709">
    <property type="protein sequence ID" value="AIZ95633.1"/>
    <property type="molecule type" value="Viral_cRNA"/>
</dbReference>
<dbReference type="EMBL" id="KP258710">
    <property type="protein sequence ID" value="AIZ95644.1"/>
    <property type="molecule type" value="Viral_cRNA"/>
</dbReference>
<dbReference type="EMBL" id="KP258711">
    <property type="protein sequence ID" value="AIZ95655.1"/>
    <property type="molecule type" value="Viral_cRNA"/>
</dbReference>
<dbReference type="EMBL" id="KP258715">
    <property type="protein sequence ID" value="AIZ95699.1"/>
    <property type="molecule type" value="Viral_cRNA"/>
</dbReference>
<dbReference type="EMBL" id="KP258722">
    <property type="protein sequence ID" value="AIZ95765.1"/>
    <property type="molecule type" value="Viral_cRNA"/>
</dbReference>
<dbReference type="EMBL" id="KP258723">
    <property type="protein sequence ID" value="AIZ95776.1"/>
    <property type="molecule type" value="Viral_cRNA"/>
</dbReference>
<dbReference type="EMBL" id="KP258725">
    <property type="protein sequence ID" value="AIZ95798.1"/>
    <property type="molecule type" value="Viral_cRNA"/>
</dbReference>
<dbReference type="EMBL" id="KP258726">
    <property type="protein sequence ID" value="AIZ95809.1"/>
    <property type="molecule type" value="Viral_cRNA"/>
</dbReference>
<dbReference type="EMBL" id="KP258727">
    <property type="protein sequence ID" value="AIZ95820.1"/>
    <property type="molecule type" value="Viral_cRNA"/>
</dbReference>
<dbReference type="EMBL" id="KP258728">
    <property type="protein sequence ID" value="AIZ95831.1"/>
    <property type="molecule type" value="Viral_cRNA"/>
</dbReference>
<dbReference type="EMBL" id="KP258732">
    <property type="protein sequence ID" value="AIZ95875.1"/>
    <property type="molecule type" value="Viral_cRNA"/>
</dbReference>
<dbReference type="EMBL" id="KP258733">
    <property type="protein sequence ID" value="AIZ95886.1"/>
    <property type="molecule type" value="Viral_cRNA"/>
</dbReference>
<dbReference type="EMBL" id="KP258734">
    <property type="protein sequence ID" value="AIZ95897.1"/>
    <property type="molecule type" value="Viral_cRNA"/>
</dbReference>
<dbReference type="EMBL" id="KP258737">
    <property type="protein sequence ID" value="AIZ95930.1"/>
    <property type="molecule type" value="Viral_cRNA"/>
</dbReference>
<dbReference type="EMBL" id="KP258740">
    <property type="protein sequence ID" value="AIZ95963.1"/>
    <property type="molecule type" value="Viral_cRNA"/>
</dbReference>
<dbReference type="EMBL" id="KJ939943">
    <property type="protein sequence ID" value="AJZ69862.1"/>
    <property type="molecule type" value="Viral_cRNA"/>
</dbReference>
<dbReference type="EMBL" id="KJ939954">
    <property type="protein sequence ID" value="AJZ69983.1"/>
    <property type="molecule type" value="Viral_cRNA"/>
</dbReference>
<dbReference type="EMBL" id="KP856967">
    <property type="protein sequence ID" value="AKA45853.1"/>
    <property type="molecule type" value="Viral_cRNA"/>
</dbReference>
<dbReference type="EMBL" id="KP856969">
    <property type="protein sequence ID" value="AKA45875.1"/>
    <property type="molecule type" value="Viral_cRNA"/>
</dbReference>
<dbReference type="EMBL" id="KU316090">
    <property type="protein sequence ID" value="AMA66331.1"/>
    <property type="molecule type" value="Viral_cRNA"/>
</dbReference>
<dbReference type="EMBL" id="KU316092">
    <property type="protein sequence ID" value="AMA66353.1"/>
    <property type="molecule type" value="Viral_cRNA"/>
</dbReference>
<dbReference type="EMBL" id="KU316093">
    <property type="protein sequence ID" value="AMA66364.1"/>
    <property type="molecule type" value="Viral_cRNA"/>
</dbReference>
<dbReference type="EMBL" id="KU316098">
    <property type="protein sequence ID" value="AMA66419.1"/>
    <property type="molecule type" value="Viral_cRNA"/>
</dbReference>
<dbReference type="EMBL" id="KU316104">
    <property type="protein sequence ID" value="AMA66485.1"/>
    <property type="molecule type" value="Viral_cRNA"/>
</dbReference>
<dbReference type="EMBL" id="KU316110">
    <property type="protein sequence ID" value="AMA66551.1"/>
    <property type="molecule type" value="Viral_cRNA"/>
</dbReference>
<dbReference type="EMBL" id="KU316121">
    <property type="protein sequence ID" value="AMA66672.1"/>
    <property type="molecule type" value="Viral_cRNA"/>
</dbReference>
<dbReference type="EMBL" id="KU316125">
    <property type="protein sequence ID" value="AMA66716.1"/>
    <property type="molecule type" value="Viral_cRNA"/>
</dbReference>
<dbReference type="EMBL" id="KU316126">
    <property type="protein sequence ID" value="AMA66727.1"/>
    <property type="molecule type" value="Viral_cRNA"/>
</dbReference>
<dbReference type="EMBL" id="KU316133">
    <property type="protein sequence ID" value="AMA66804.1"/>
    <property type="molecule type" value="Viral_cRNA"/>
</dbReference>
<dbReference type="EMBL" id="KU316135">
    <property type="protein sequence ID" value="AMA66826.1"/>
    <property type="molecule type" value="Viral_cRNA"/>
</dbReference>
<dbReference type="EMBL" id="KU316138">
    <property type="protein sequence ID" value="AMA66859.1"/>
    <property type="molecule type" value="Viral_cRNA"/>
</dbReference>
<dbReference type="EMBL" id="KU316142">
    <property type="protein sequence ID" value="AMA66903.1"/>
    <property type="molecule type" value="Viral_cRNA"/>
</dbReference>
<dbReference type="EMBL" id="KU316143">
    <property type="protein sequence ID" value="AMA66914.1"/>
    <property type="molecule type" value="Viral_cRNA"/>
</dbReference>
<dbReference type="EMBL" id="KU316145">
    <property type="protein sequence ID" value="AMA66936.1"/>
    <property type="molecule type" value="Viral_cRNA"/>
</dbReference>
<dbReference type="EMBL" id="KU316148">
    <property type="protein sequence ID" value="AMA66969.1"/>
    <property type="molecule type" value="Viral_cRNA"/>
</dbReference>
<dbReference type="EMBL" id="KU316149">
    <property type="protein sequence ID" value="AMA66980.1"/>
    <property type="molecule type" value="Viral_cRNA"/>
</dbReference>
<dbReference type="EMBL" id="KU316150">
    <property type="protein sequence ID" value="AMA66991.1"/>
    <property type="molecule type" value="Viral_cRNA"/>
</dbReference>
<dbReference type="EMBL" id="KU316157">
    <property type="protein sequence ID" value="AMA67068.1"/>
    <property type="molecule type" value="Viral_cRNA"/>
</dbReference>
<dbReference type="EMBL" id="KU316161">
    <property type="protein sequence ID" value="AMA67112.1"/>
    <property type="molecule type" value="Viral_cRNA"/>
</dbReference>
<dbReference type="EMBL" id="KU316166">
    <property type="protein sequence ID" value="AMA67167.1"/>
    <property type="molecule type" value="Viral_cRNA"/>
</dbReference>
<dbReference type="EMBL" id="KU316167">
    <property type="protein sequence ID" value="AMA67178.1"/>
    <property type="molecule type" value="Viral_cRNA"/>
</dbReference>
<dbReference type="EMBL" id="KU316170">
    <property type="protein sequence ID" value="AMA67211.1"/>
    <property type="molecule type" value="Viral_cRNA"/>
</dbReference>
<dbReference type="EMBL" id="KU316176">
    <property type="protein sequence ID" value="AMA67277.1"/>
    <property type="molecule type" value="Viral_cRNA"/>
</dbReference>
<dbReference type="EMBL" id="KU316180">
    <property type="protein sequence ID" value="AMA67321.1"/>
    <property type="molecule type" value="Viral_cRNA"/>
</dbReference>
<dbReference type="EMBL" id="KU707921">
    <property type="protein sequence ID" value="AMQ35396.1"/>
    <property type="molecule type" value="Genomic_RNA"/>
</dbReference>
<dbReference type="EMBL" id="KU950473">
    <property type="protein sequence ID" value="AMT77527.1"/>
    <property type="molecule type" value="Viral_cRNA"/>
</dbReference>
<dbReference type="EMBL" id="KU950479">
    <property type="protein sequence ID" value="AMT77593.1"/>
    <property type="molecule type" value="Viral_cRNA"/>
</dbReference>
<dbReference type="EMBL" id="KU950487">
    <property type="protein sequence ID" value="AMT77681.1"/>
    <property type="molecule type" value="Viral_cRNA"/>
</dbReference>
<dbReference type="EMBL" id="KU950501">
    <property type="protein sequence ID" value="AMT77824.1"/>
    <property type="molecule type" value="Viral_cRNA"/>
</dbReference>
<dbReference type="EMBL" id="KU950561">
    <property type="protein sequence ID" value="AMT78473.1"/>
    <property type="molecule type" value="Viral_cRNA"/>
</dbReference>
<dbReference type="EMBL" id="KU950564">
    <property type="protein sequence ID" value="AMT78506.1"/>
    <property type="molecule type" value="Viral_cRNA"/>
</dbReference>
<dbReference type="EMBL" id="KU950609">
    <property type="protein sequence ID" value="AMT78974.1"/>
    <property type="molecule type" value="Viral_cRNA"/>
</dbReference>
<dbReference type="EMBL" id="KU950616">
    <property type="protein sequence ID" value="AMT79051.1"/>
    <property type="molecule type" value="Viral_cRNA"/>
</dbReference>
<dbReference type="EMBL" id="KX765933">
    <property type="protein sequence ID" value="AOS48709.1"/>
    <property type="molecule type" value="Viral_cRNA"/>
</dbReference>
<dbReference type="EMBL" id="KX894798">
    <property type="protein sequence ID" value="AOZ15406.1"/>
    <property type="molecule type" value="Viral_cRNA"/>
</dbReference>
<dbReference type="EMBL" id="KX894800">
    <property type="protein sequence ID" value="AOZ15428.1"/>
    <property type="molecule type" value="Viral_cRNA"/>
</dbReference>
<dbReference type="EMBL" id="KX348546">
    <property type="protein sequence ID" value="API65183.1"/>
    <property type="molecule type" value="Genomic_RNA"/>
</dbReference>
<dbReference type="EMBL" id="MH760599">
    <property type="protein sequence ID" value="AYA60924.1"/>
    <property type="molecule type" value="Viral_cRNA"/>
</dbReference>
<dbReference type="EMBL" id="MK810782">
    <property type="protein sequence ID" value="QFX69105.1"/>
    <property type="molecule type" value="Genomic_RNA"/>
</dbReference>
<dbReference type="EMBL" id="MK816924">
    <property type="protein sequence ID" value="QFX69116.1"/>
    <property type="molecule type" value="Genomic_RNA"/>
</dbReference>
<dbReference type="EMBL" id="MW039343">
    <property type="protein sequence ID" value="QPB74368.1"/>
    <property type="molecule type" value="Viral_cRNA"/>
</dbReference>
<dbReference type="EMBL" id="MT994242">
    <property type="protein sequence ID" value="QXO84935.1"/>
    <property type="molecule type" value="Genomic_RNA"/>
</dbReference>
<dbReference type="EMBL" id="MT994243">
    <property type="protein sequence ID" value="QXO84946.1"/>
    <property type="molecule type" value="Genomic_RNA"/>
</dbReference>
<dbReference type="SMR" id="Q86306"/>
<dbReference type="Proteomes" id="UP000096350">
    <property type="component" value="Genome"/>
</dbReference>
<dbReference type="Proteomes" id="UP000097649">
    <property type="component" value="Genome"/>
</dbReference>
<dbReference type="Proteomes" id="UP000097867">
    <property type="component" value="Genome"/>
</dbReference>
<dbReference type="Proteomes" id="UP000099468">
    <property type="component" value="Genome"/>
</dbReference>
<dbReference type="Proteomes" id="UP000100633">
    <property type="component" value="Genome"/>
</dbReference>
<dbReference type="Proteomes" id="UP000101307">
    <property type="component" value="Genome"/>
</dbReference>
<dbReference type="Proteomes" id="UP000102952">
    <property type="component" value="Genome"/>
</dbReference>
<dbReference type="Proteomes" id="UP000103294">
    <property type="component" value="Genome"/>
</dbReference>
<dbReference type="Proteomes" id="UP000103917">
    <property type="component" value="Genome"/>
</dbReference>
<dbReference type="Proteomes" id="UP000104732">
    <property type="component" value="Genome"/>
</dbReference>
<dbReference type="Proteomes" id="UP000104938">
    <property type="component" value="Genome"/>
</dbReference>
<dbReference type="Proteomes" id="UP000104988">
    <property type="component" value="Genome"/>
</dbReference>
<dbReference type="Proteomes" id="UP000106195">
    <property type="component" value="Genome"/>
</dbReference>
<dbReference type="Proteomes" id="UP000107305">
    <property type="component" value="Genome"/>
</dbReference>
<dbReference type="Proteomes" id="UP000108247">
    <property type="component" value="Genome"/>
</dbReference>
<dbReference type="Proteomes" id="UP000108632">
    <property type="component" value="Genome"/>
</dbReference>
<dbReference type="Proteomes" id="UP000108753">
    <property type="component" value="Genome"/>
</dbReference>
<dbReference type="Proteomes" id="UP000109366">
    <property type="component" value="Genome"/>
</dbReference>
<dbReference type="Proteomes" id="UP000109411">
    <property type="component" value="Genome"/>
</dbReference>
<dbReference type="Proteomes" id="UP000109639">
    <property type="component" value="Genome"/>
</dbReference>
<dbReference type="Proteomes" id="UP000109812">
    <property type="component" value="Genome"/>
</dbReference>
<dbReference type="Proteomes" id="UP000110506">
    <property type="component" value="Genome"/>
</dbReference>
<dbReference type="Proteomes" id="UP000110681">
    <property type="component" value="Genome"/>
</dbReference>
<dbReference type="Proteomes" id="UP000113912">
    <property type="component" value="Genome"/>
</dbReference>
<dbReference type="Proteomes" id="UP000114376">
    <property type="component" value="Genome"/>
</dbReference>
<dbReference type="Proteomes" id="UP000115474">
    <property type="component" value="Genome"/>
</dbReference>
<dbReference type="Proteomes" id="UP000115499">
    <property type="component" value="Genome"/>
</dbReference>
<dbReference type="Proteomes" id="UP000115758">
    <property type="component" value="Genome"/>
</dbReference>
<dbReference type="Proteomes" id="UP000117108">
    <property type="component" value="Genome"/>
</dbReference>
<dbReference type="Proteomes" id="UP000118123">
    <property type="component" value="Genome"/>
</dbReference>
<dbReference type="Proteomes" id="UP000119304">
    <property type="component" value="Genome"/>
</dbReference>
<dbReference type="Proteomes" id="UP000119847">
    <property type="component" value="Genome"/>
</dbReference>
<dbReference type="Proteomes" id="UP000120345">
    <property type="component" value="Genome"/>
</dbReference>
<dbReference type="Proteomes" id="UP000120698">
    <property type="component" value="Genome"/>
</dbReference>
<dbReference type="Proteomes" id="UP000121677">
    <property type="component" value="Genome"/>
</dbReference>
<dbReference type="Proteomes" id="UP000122039">
    <property type="component" value="Genome"/>
</dbReference>
<dbReference type="Proteomes" id="UP000123356">
    <property type="component" value="Genome"/>
</dbReference>
<dbReference type="Proteomes" id="UP000127803">
    <property type="component" value="Genome"/>
</dbReference>
<dbReference type="Proteomes" id="UP000128880">
    <property type="component" value="Genome"/>
</dbReference>
<dbReference type="Proteomes" id="UP000129855">
    <property type="component" value="Genome"/>
</dbReference>
<dbReference type="Proteomes" id="UP000130886">
    <property type="component" value="Genome"/>
</dbReference>
<dbReference type="Proteomes" id="UP000132861">
    <property type="component" value="Genome"/>
</dbReference>
<dbReference type="Proteomes" id="UP000132993">
    <property type="component" value="Genome"/>
</dbReference>
<dbReference type="Proteomes" id="UP000133610">
    <property type="component" value="Genome"/>
</dbReference>
<dbReference type="Proteomes" id="UP000133837">
    <property type="component" value="Genome"/>
</dbReference>
<dbReference type="Proteomes" id="UP000135745">
    <property type="component" value="Genome"/>
</dbReference>
<dbReference type="Proteomes" id="UP000135781">
    <property type="component" value="Genome"/>
</dbReference>
<dbReference type="Proteomes" id="UP000136124">
    <property type="component" value="Genome"/>
</dbReference>
<dbReference type="Proteomes" id="UP000136174">
    <property type="component" value="Genome"/>
</dbReference>
<dbReference type="Proteomes" id="UP000136812">
    <property type="component" value="Genome"/>
</dbReference>
<dbReference type="Proteomes" id="UP000137548">
    <property type="component" value="Genome"/>
</dbReference>
<dbReference type="Proteomes" id="UP000137569">
    <property type="component" value="Genome"/>
</dbReference>
<dbReference type="Proteomes" id="UP000138273">
    <property type="component" value="Genome"/>
</dbReference>
<dbReference type="Proteomes" id="UP000138938">
    <property type="component" value="Genome"/>
</dbReference>
<dbReference type="Proteomes" id="UP000139562">
    <property type="component" value="Genome"/>
</dbReference>
<dbReference type="Proteomes" id="UP000140270">
    <property type="component" value="Genome"/>
</dbReference>
<dbReference type="Proteomes" id="UP000140765">
    <property type="component" value="Genome"/>
</dbReference>
<dbReference type="Proteomes" id="UP000141045">
    <property type="component" value="Genome"/>
</dbReference>
<dbReference type="Proteomes" id="UP000142127">
    <property type="component" value="Genome"/>
</dbReference>
<dbReference type="Proteomes" id="UP000142226">
    <property type="component" value="Genome"/>
</dbReference>
<dbReference type="Proteomes" id="UP000142437">
    <property type="component" value="Genome"/>
</dbReference>
<dbReference type="Proteomes" id="UP000142701">
    <property type="component" value="Genome"/>
</dbReference>
<dbReference type="Proteomes" id="UP000145056">
    <property type="component" value="Genome"/>
</dbReference>
<dbReference type="Proteomes" id="UP000146654">
    <property type="component" value="Genome"/>
</dbReference>
<dbReference type="Proteomes" id="UP000147115">
    <property type="component" value="Genome"/>
</dbReference>
<dbReference type="Proteomes" id="UP000149003">
    <property type="component" value="Genome"/>
</dbReference>
<dbReference type="Proteomes" id="UP000150184">
    <property type="component" value="Genome"/>
</dbReference>
<dbReference type="Proteomes" id="UP000150329">
    <property type="component" value="Genome"/>
</dbReference>
<dbReference type="Proteomes" id="UP000151057">
    <property type="component" value="Genome"/>
</dbReference>
<dbReference type="Proteomes" id="UP000152853">
    <property type="component" value="Genome"/>
</dbReference>
<dbReference type="Proteomes" id="UP000153397">
    <property type="component" value="Genome"/>
</dbReference>
<dbReference type="Proteomes" id="UP000153464">
    <property type="component" value="Genome"/>
</dbReference>
<dbReference type="Proteomes" id="UP000154052">
    <property type="component" value="Genome"/>
</dbReference>
<dbReference type="Proteomes" id="UP000154208">
    <property type="component" value="Genome"/>
</dbReference>
<dbReference type="Proteomes" id="UP000155151">
    <property type="component" value="Genome"/>
</dbReference>
<dbReference type="Proteomes" id="UP000156969">
    <property type="component" value="Genome"/>
</dbReference>
<dbReference type="Proteomes" id="UP000157691">
    <property type="component" value="Genome"/>
</dbReference>
<dbReference type="Proteomes" id="UP000158141">
    <property type="component" value="Genome"/>
</dbReference>
<dbReference type="Proteomes" id="UP000158316">
    <property type="component" value="Genome"/>
</dbReference>
<dbReference type="Proteomes" id="UP000158641">
    <property type="component" value="Genome"/>
</dbReference>
<dbReference type="Proteomes" id="UP000159103">
    <property type="component" value="Genome"/>
</dbReference>
<dbReference type="Proteomes" id="UP000159246">
    <property type="component" value="Genome"/>
</dbReference>
<dbReference type="Proteomes" id="UP000162706">
    <property type="component" value="Genome"/>
</dbReference>
<dbReference type="Proteomes" id="UP000163033">
    <property type="component" value="Genome"/>
</dbReference>
<dbReference type="Proteomes" id="UP000163456">
    <property type="component" value="Genome"/>
</dbReference>
<dbReference type="Proteomes" id="UP000163498">
    <property type="component" value="Genome"/>
</dbReference>
<dbReference type="Proteomes" id="UP000163705">
    <property type="component" value="Genome"/>
</dbReference>
<dbReference type="Proteomes" id="UP000164352">
    <property type="component" value="Genome"/>
</dbReference>
<dbReference type="Proteomes" id="UP000167020">
    <property type="component" value="Genome"/>
</dbReference>
<dbReference type="Proteomes" id="UP000167258">
    <property type="component" value="Genome"/>
</dbReference>
<dbReference type="Proteomes" id="UP000167572">
    <property type="component" value="Genome"/>
</dbReference>
<dbReference type="Proteomes" id="UP000168531">
    <property type="component" value="Genome"/>
</dbReference>
<dbReference type="Proteomes" id="UP000169126">
    <property type="component" value="Genome"/>
</dbReference>
<dbReference type="Proteomes" id="UP000170455">
    <property type="component" value="Genome"/>
</dbReference>
<dbReference type="Proteomes" id="UP000170687">
    <property type="component" value="Genome"/>
</dbReference>
<dbReference type="Proteomes" id="UP000170992">
    <property type="component" value="Genome"/>
</dbReference>
<dbReference type="Proteomes" id="UP000171641">
    <property type="component" value="Genome"/>
</dbReference>
<dbReference type="Proteomes" id="UP000172132">
    <property type="component" value="Genome"/>
</dbReference>
<dbReference type="Proteomes" id="UP000172433">
    <property type="component" value="Genome"/>
</dbReference>
<dbReference type="Proteomes" id="UP000173412">
    <property type="component" value="Genome"/>
</dbReference>
<dbReference type="Proteomes" id="UP000173926">
    <property type="component" value="Genome"/>
</dbReference>
<dbReference type="Proteomes" id="UP000173951">
    <property type="component" value="Genome"/>
</dbReference>
<dbReference type="Proteomes" id="UP000174518">
    <property type="component" value="Genome"/>
</dbReference>
<dbReference type="Proteomes" id="UP000174524">
    <property type="component" value="Genome"/>
</dbReference>
<dbReference type="Proteomes" id="UP000175026">
    <property type="component" value="Genome"/>
</dbReference>
<dbReference type="Proteomes" id="UP000175062">
    <property type="component" value="Genome"/>
</dbReference>
<dbReference type="GO" id="GO:0033650">
    <property type="term" value="C:host cell mitochondrion"/>
    <property type="evidence" value="ECO:0007669"/>
    <property type="project" value="UniProtKB-SubCell"/>
</dbReference>
<dbReference type="GO" id="GO:0042025">
    <property type="term" value="C:host cell nucleus"/>
    <property type="evidence" value="ECO:0007669"/>
    <property type="project" value="UniProtKB-SubCell"/>
</dbReference>
<dbReference type="GO" id="GO:0052150">
    <property type="term" value="P:symbiont-mediated perturbation of host apoptosis"/>
    <property type="evidence" value="ECO:0007669"/>
    <property type="project" value="UniProtKB-KW"/>
</dbReference>
<dbReference type="GO" id="GO:0039504">
    <property type="term" value="P:symbiont-mediated suppression of host adaptive immune response"/>
    <property type="evidence" value="ECO:0007669"/>
    <property type="project" value="UniProtKB-KW"/>
</dbReference>
<dbReference type="GO" id="GO:0039548">
    <property type="term" value="P:symbiont-mediated suppression of host cytoplasmic pattern recognition receptor signaling pathway via inhibition of IRF3 activity"/>
    <property type="evidence" value="ECO:0007669"/>
    <property type="project" value="UniProtKB-KW"/>
</dbReference>
<dbReference type="GO" id="GO:0039557">
    <property type="term" value="P:symbiont-mediated suppression of host cytoplasmic pattern recognition receptor signaling pathway via inhibition of IRF7 activity"/>
    <property type="evidence" value="ECO:0007669"/>
    <property type="project" value="UniProtKB-KW"/>
</dbReference>
<dbReference type="GO" id="GO:0039545">
    <property type="term" value="P:symbiont-mediated suppression of host cytoplasmic pattern recognition receptor signaling pathway via inhibition of MAVS activity"/>
    <property type="evidence" value="ECO:0007669"/>
    <property type="project" value="UniProtKB-KW"/>
</dbReference>
<dbReference type="GO" id="GO:0039540">
    <property type="term" value="P:symbiont-mediated suppression of host cytoplasmic pattern recognition receptor signaling pathway via inhibition of RIG-I activity"/>
    <property type="evidence" value="ECO:0007669"/>
    <property type="project" value="UniProtKB-KW"/>
</dbReference>
<dbReference type="GO" id="GO:0039723">
    <property type="term" value="P:symbiont-mediated suppression of host cytoplasmic pattern recognition receptor signaling pathway via inhibition of TBK1 activity"/>
    <property type="evidence" value="ECO:0007669"/>
    <property type="project" value="UniProtKB-KW"/>
</dbReference>
<dbReference type="GO" id="GO:0039564">
    <property type="term" value="P:symbiont-mediated suppression of host JAK-STAT cascade via inhibition of STAT2 activity"/>
    <property type="evidence" value="ECO:0007669"/>
    <property type="project" value="UniProtKB-KW"/>
</dbReference>
<dbReference type="GO" id="GO:0039722">
    <property type="term" value="P:symbiont-mediated suppression of host toll-like receptor signaling pathway"/>
    <property type="evidence" value="ECO:0007669"/>
    <property type="project" value="UniProtKB-KW"/>
</dbReference>
<dbReference type="GO" id="GO:0039502">
    <property type="term" value="P:symbiont-mediated suppression of host type I interferon-mediated signaling pathway"/>
    <property type="evidence" value="ECO:0007669"/>
    <property type="project" value="UniProtKB-KW"/>
</dbReference>
<dbReference type="InterPro" id="IPR005099">
    <property type="entry name" value="Pneumo_NS1"/>
</dbReference>
<dbReference type="Pfam" id="PF03438">
    <property type="entry name" value="Pneumo_NS1"/>
    <property type="match status" value="1"/>
</dbReference>
<organism>
    <name type="scientific">Human respiratory syncytial virus</name>
    <dbReference type="NCBI Taxonomy" id="11250"/>
    <lineage>
        <taxon>Viruses</taxon>
        <taxon>Riboviria</taxon>
        <taxon>Orthornavirae</taxon>
        <taxon>Negarnaviricota</taxon>
        <taxon>Haploviricotina</taxon>
        <taxon>Monjiviricetes</taxon>
        <taxon>Mononegavirales</taxon>
        <taxon>Pneumoviridae</taxon>
        <taxon>Orthopneumovirus</taxon>
        <taxon>Orthopneumovirus hominis</taxon>
    </lineage>
</organism>
<accession>Q86306</accession>
<accession>Q4KRX1</accession>
<sequence length="139" mass="15539">MGSNSLSMIKVRLQNLFDNDEVALLKITCYTDKLIHLTNALAKAVIHTIKLNGIVFVHVITSSDICPNNNIVVKSNFTTMPALQNGGYIWEMMELTHCSQPNGLIDDNCEIKFSKKLSDSTMTNYMNQLSELLGFDLNP</sequence>